<organism>
    <name type="scientific">Drosophila melanogaster</name>
    <name type="common">Fruit fly</name>
    <dbReference type="NCBI Taxonomy" id="7227"/>
    <lineage>
        <taxon>Eukaryota</taxon>
        <taxon>Metazoa</taxon>
        <taxon>Ecdysozoa</taxon>
        <taxon>Arthropoda</taxon>
        <taxon>Hexapoda</taxon>
        <taxon>Insecta</taxon>
        <taxon>Pterygota</taxon>
        <taxon>Neoptera</taxon>
        <taxon>Endopterygota</taxon>
        <taxon>Diptera</taxon>
        <taxon>Brachycera</taxon>
        <taxon>Muscomorpha</taxon>
        <taxon>Ephydroidea</taxon>
        <taxon>Drosophilidae</taxon>
        <taxon>Drosophila</taxon>
        <taxon>Sophophora</taxon>
    </lineage>
</organism>
<dbReference type="EMBL" id="AE014298">
    <property type="protein sequence ID" value="AAS65333.2"/>
    <property type="molecule type" value="Genomic_DNA"/>
</dbReference>
<dbReference type="EMBL" id="AE014298">
    <property type="protein sequence ID" value="AAS65335.2"/>
    <property type="molecule type" value="Genomic_DNA"/>
</dbReference>
<dbReference type="RefSeq" id="NP_996427.2">
    <property type="nucleotide sequence ID" value="NM_206704.2"/>
</dbReference>
<dbReference type="RefSeq" id="NP_996429.2">
    <property type="nucleotide sequence ID" value="NM_206706.3"/>
</dbReference>
<dbReference type="SMR" id="Q7KV15"/>
<dbReference type="FunCoup" id="Q7KV15">
    <property type="interactions" value="168"/>
</dbReference>
<dbReference type="STRING" id="7227.FBpp0289365"/>
<dbReference type="PaxDb" id="7227-FBpp0289365"/>
<dbReference type="EnsemblMetazoa" id="FBtr0300088">
    <property type="protein sequence ID" value="FBpp0289365"/>
    <property type="gene ID" value="FBgn0053239"/>
</dbReference>
<dbReference type="EnsemblMetazoa" id="FBtr0300090">
    <property type="protein sequence ID" value="FBpp0289367"/>
    <property type="gene ID" value="FBgn0053241"/>
</dbReference>
<dbReference type="GeneID" id="2768899"/>
<dbReference type="GeneID" id="2768901"/>
<dbReference type="KEGG" id="dme:Dmel_CG33239"/>
<dbReference type="KEGG" id="dme:Dmel_CG33241"/>
<dbReference type="UCSC" id="CG33239-RB">
    <property type="organism name" value="d. melanogaster"/>
</dbReference>
<dbReference type="AGR" id="FB:FBgn0003523"/>
<dbReference type="AGR" id="FB:FBgn0053239"/>
<dbReference type="AGR" id="FB:FBgn0053241"/>
<dbReference type="CTD" id="2768899"/>
<dbReference type="CTD" id="2768901"/>
<dbReference type="FlyBase" id="FBgn0053239">
    <property type="gene designation" value="Ste:CG33239"/>
</dbReference>
<dbReference type="FlyBase" id="FBgn0053241">
    <property type="gene designation" value="Ste:CG33241"/>
</dbReference>
<dbReference type="VEuPathDB" id="VectorBase:FBgn0053239"/>
<dbReference type="VEuPathDB" id="VectorBase:FBgn0053241"/>
<dbReference type="eggNOG" id="KOG3092">
    <property type="taxonomic scope" value="Eukaryota"/>
</dbReference>
<dbReference type="GeneTree" id="ENSGT00390000003781"/>
<dbReference type="HOGENOM" id="CLU_034027_3_3_1"/>
<dbReference type="InParanoid" id="Q7KV15"/>
<dbReference type="OrthoDB" id="3971593at2759"/>
<dbReference type="PhylomeDB" id="Q7KV15"/>
<dbReference type="PRO" id="PR:Q7KV15"/>
<dbReference type="Proteomes" id="UP000000803">
    <property type="component" value="Chromosome X"/>
</dbReference>
<dbReference type="Bgee" id="FBgn0053239">
    <property type="expression patterns" value="Expressed in multicellular organism and 2 other cell types or tissues"/>
</dbReference>
<dbReference type="GO" id="GO:0005737">
    <property type="term" value="C:cytoplasm"/>
    <property type="evidence" value="ECO:0000314"/>
    <property type="project" value="FlyBase"/>
</dbReference>
<dbReference type="GO" id="GO:0005634">
    <property type="term" value="C:nucleus"/>
    <property type="evidence" value="ECO:0000314"/>
    <property type="project" value="FlyBase"/>
</dbReference>
<dbReference type="GO" id="GO:0005956">
    <property type="term" value="C:protein kinase CK2 complex"/>
    <property type="evidence" value="ECO:0000314"/>
    <property type="project" value="FlyBase"/>
</dbReference>
<dbReference type="GO" id="GO:0019887">
    <property type="term" value="F:protein kinase regulator activity"/>
    <property type="evidence" value="ECO:0000315"/>
    <property type="project" value="FlyBase"/>
</dbReference>
<dbReference type="FunFam" id="1.10.1820.10:FF:000005">
    <property type="entry name" value="Casein kinase II subunit beta"/>
    <property type="match status" value="1"/>
</dbReference>
<dbReference type="FunFam" id="2.20.25.20:FF:000001">
    <property type="entry name" value="Casein kinase II subunit beta"/>
    <property type="match status" value="1"/>
</dbReference>
<dbReference type="Gene3D" id="2.20.25.20">
    <property type="match status" value="1"/>
</dbReference>
<dbReference type="Gene3D" id="1.10.1820.10">
    <property type="entry name" value="protein kinase ck2 holoenzyme, chain C, domain 1"/>
    <property type="match status" value="1"/>
</dbReference>
<dbReference type="InterPro" id="IPR016149">
    <property type="entry name" value="Casein_kin_II_reg-sub_N"/>
</dbReference>
<dbReference type="InterPro" id="IPR035991">
    <property type="entry name" value="Casein_kinase_II_beta-like"/>
</dbReference>
<dbReference type="InterPro" id="IPR000704">
    <property type="entry name" value="Casein_kinase_II_reg-sub"/>
</dbReference>
<dbReference type="PANTHER" id="PTHR11740">
    <property type="entry name" value="CASEIN KINASE II SUBUNIT BETA"/>
    <property type="match status" value="1"/>
</dbReference>
<dbReference type="PANTHER" id="PTHR11740:SF0">
    <property type="entry name" value="CASEIN KINASE II SUBUNIT BETA"/>
    <property type="match status" value="1"/>
</dbReference>
<dbReference type="Pfam" id="PF01214">
    <property type="entry name" value="CK_II_beta"/>
    <property type="match status" value="1"/>
</dbReference>
<dbReference type="PRINTS" id="PR00472">
    <property type="entry name" value="CASNKINASEII"/>
</dbReference>
<dbReference type="SMART" id="SM01085">
    <property type="entry name" value="CK_II_beta"/>
    <property type="match status" value="1"/>
</dbReference>
<dbReference type="SUPFAM" id="SSF57798">
    <property type="entry name" value="Casein kinase II beta subunit"/>
    <property type="match status" value="1"/>
</dbReference>
<dbReference type="PROSITE" id="PS01101">
    <property type="entry name" value="CK2_BETA"/>
    <property type="match status" value="1"/>
</dbReference>
<gene>
    <name type="primary">Ste:CG33239</name>
    <name type="ORF">CG33239</name>
</gene>
<gene>
    <name type="primary">Ste:CG33241</name>
    <name type="ORF">CG33241</name>
</gene>
<proteinExistence type="evidence at protein level"/>
<name>STEL4_DROME</name>
<protein>
    <recommendedName>
        <fullName>Stellate protein CG33239/CG33241</fullName>
    </recommendedName>
</protein>
<reference key="1">
    <citation type="journal article" date="2000" name="Science">
        <title>The genome sequence of Drosophila melanogaster.</title>
        <authorList>
            <person name="Adams M.D."/>
            <person name="Celniker S.E."/>
            <person name="Holt R.A."/>
            <person name="Evans C.A."/>
            <person name="Gocayne J.D."/>
            <person name="Amanatides P.G."/>
            <person name="Scherer S.E."/>
            <person name="Li P.W."/>
            <person name="Hoskins R.A."/>
            <person name="Galle R.F."/>
            <person name="George R.A."/>
            <person name="Lewis S.E."/>
            <person name="Richards S."/>
            <person name="Ashburner M."/>
            <person name="Henderson S.N."/>
            <person name="Sutton G.G."/>
            <person name="Wortman J.R."/>
            <person name="Yandell M.D."/>
            <person name="Zhang Q."/>
            <person name="Chen L.X."/>
            <person name="Brandon R.C."/>
            <person name="Rogers Y.-H.C."/>
            <person name="Blazej R.G."/>
            <person name="Champe M."/>
            <person name="Pfeiffer B.D."/>
            <person name="Wan K.H."/>
            <person name="Doyle C."/>
            <person name="Baxter E.G."/>
            <person name="Helt G."/>
            <person name="Nelson C.R."/>
            <person name="Miklos G.L.G."/>
            <person name="Abril J.F."/>
            <person name="Agbayani A."/>
            <person name="An H.-J."/>
            <person name="Andrews-Pfannkoch C."/>
            <person name="Baldwin D."/>
            <person name="Ballew R.M."/>
            <person name="Basu A."/>
            <person name="Baxendale J."/>
            <person name="Bayraktaroglu L."/>
            <person name="Beasley E.M."/>
            <person name="Beeson K.Y."/>
            <person name="Benos P.V."/>
            <person name="Berman B.P."/>
            <person name="Bhandari D."/>
            <person name="Bolshakov S."/>
            <person name="Borkova D."/>
            <person name="Botchan M.R."/>
            <person name="Bouck J."/>
            <person name="Brokstein P."/>
            <person name="Brottier P."/>
            <person name="Burtis K.C."/>
            <person name="Busam D.A."/>
            <person name="Butler H."/>
            <person name="Cadieu E."/>
            <person name="Center A."/>
            <person name="Chandra I."/>
            <person name="Cherry J.M."/>
            <person name="Cawley S."/>
            <person name="Dahlke C."/>
            <person name="Davenport L.B."/>
            <person name="Davies P."/>
            <person name="de Pablos B."/>
            <person name="Delcher A."/>
            <person name="Deng Z."/>
            <person name="Mays A.D."/>
            <person name="Dew I."/>
            <person name="Dietz S.M."/>
            <person name="Dodson K."/>
            <person name="Doup L.E."/>
            <person name="Downes M."/>
            <person name="Dugan-Rocha S."/>
            <person name="Dunkov B.C."/>
            <person name="Dunn P."/>
            <person name="Durbin K.J."/>
            <person name="Evangelista C.C."/>
            <person name="Ferraz C."/>
            <person name="Ferriera S."/>
            <person name="Fleischmann W."/>
            <person name="Fosler C."/>
            <person name="Gabrielian A.E."/>
            <person name="Garg N.S."/>
            <person name="Gelbart W.M."/>
            <person name="Glasser K."/>
            <person name="Glodek A."/>
            <person name="Gong F."/>
            <person name="Gorrell J.H."/>
            <person name="Gu Z."/>
            <person name="Guan P."/>
            <person name="Harris M."/>
            <person name="Harris N.L."/>
            <person name="Harvey D.A."/>
            <person name="Heiman T.J."/>
            <person name="Hernandez J.R."/>
            <person name="Houck J."/>
            <person name="Hostin D."/>
            <person name="Houston K.A."/>
            <person name="Howland T.J."/>
            <person name="Wei M.-H."/>
            <person name="Ibegwam C."/>
            <person name="Jalali M."/>
            <person name="Kalush F."/>
            <person name="Karpen G.H."/>
            <person name="Ke Z."/>
            <person name="Kennison J.A."/>
            <person name="Ketchum K.A."/>
            <person name="Kimmel B.E."/>
            <person name="Kodira C.D."/>
            <person name="Kraft C.L."/>
            <person name="Kravitz S."/>
            <person name="Kulp D."/>
            <person name="Lai Z."/>
            <person name="Lasko P."/>
            <person name="Lei Y."/>
            <person name="Levitsky A.A."/>
            <person name="Li J.H."/>
            <person name="Li Z."/>
            <person name="Liang Y."/>
            <person name="Lin X."/>
            <person name="Liu X."/>
            <person name="Mattei B."/>
            <person name="McIntosh T.C."/>
            <person name="McLeod M.P."/>
            <person name="McPherson D."/>
            <person name="Merkulov G."/>
            <person name="Milshina N.V."/>
            <person name="Mobarry C."/>
            <person name="Morris J."/>
            <person name="Moshrefi A."/>
            <person name="Mount S.M."/>
            <person name="Moy M."/>
            <person name="Murphy B."/>
            <person name="Murphy L."/>
            <person name="Muzny D.M."/>
            <person name="Nelson D.L."/>
            <person name="Nelson D.R."/>
            <person name="Nelson K.A."/>
            <person name="Nixon K."/>
            <person name="Nusskern D.R."/>
            <person name="Pacleb J.M."/>
            <person name="Palazzolo M."/>
            <person name="Pittman G.S."/>
            <person name="Pan S."/>
            <person name="Pollard J."/>
            <person name="Puri V."/>
            <person name="Reese M.G."/>
            <person name="Reinert K."/>
            <person name="Remington K."/>
            <person name="Saunders R.D.C."/>
            <person name="Scheeler F."/>
            <person name="Shen H."/>
            <person name="Shue B.C."/>
            <person name="Siden-Kiamos I."/>
            <person name="Simpson M."/>
            <person name="Skupski M.P."/>
            <person name="Smith T.J."/>
            <person name="Spier E."/>
            <person name="Spradling A.C."/>
            <person name="Stapleton M."/>
            <person name="Strong R."/>
            <person name="Sun E."/>
            <person name="Svirskas R."/>
            <person name="Tector C."/>
            <person name="Turner R."/>
            <person name="Venter E."/>
            <person name="Wang A.H."/>
            <person name="Wang X."/>
            <person name="Wang Z.-Y."/>
            <person name="Wassarman D.A."/>
            <person name="Weinstock G.M."/>
            <person name="Weissenbach J."/>
            <person name="Williams S.M."/>
            <person name="Woodage T."/>
            <person name="Worley K.C."/>
            <person name="Wu D."/>
            <person name="Yang S."/>
            <person name="Yao Q.A."/>
            <person name="Ye J."/>
            <person name="Yeh R.-F."/>
            <person name="Zaveri J.S."/>
            <person name="Zhan M."/>
            <person name="Zhang G."/>
            <person name="Zhao Q."/>
            <person name="Zheng L."/>
            <person name="Zheng X.H."/>
            <person name="Zhong F.N."/>
            <person name="Zhong W."/>
            <person name="Zhou X."/>
            <person name="Zhu S.C."/>
            <person name="Zhu X."/>
            <person name="Smith H.O."/>
            <person name="Gibbs R.A."/>
            <person name="Myers E.W."/>
            <person name="Rubin G.M."/>
            <person name="Venter J.C."/>
        </authorList>
    </citation>
    <scope>NUCLEOTIDE SEQUENCE [LARGE SCALE GENOMIC DNA] (STE:CG33239 AND STE:CG33241)</scope>
    <source>
        <strain>Berkeley</strain>
    </source>
</reference>
<reference key="2">
    <citation type="journal article" date="2002" name="Genome Biol.">
        <title>Annotation of the Drosophila melanogaster euchromatic genome: a systematic review.</title>
        <authorList>
            <person name="Misra S."/>
            <person name="Crosby M.A."/>
            <person name="Mungall C.J."/>
            <person name="Matthews B.B."/>
            <person name="Campbell K.S."/>
            <person name="Hradecky P."/>
            <person name="Huang Y."/>
            <person name="Kaminker J.S."/>
            <person name="Millburn G.H."/>
            <person name="Prochnik S.E."/>
            <person name="Smith C.D."/>
            <person name="Tupy J.L."/>
            <person name="Whitfield E.J."/>
            <person name="Bayraktaroglu L."/>
            <person name="Berman B.P."/>
            <person name="Bettencourt B.R."/>
            <person name="Celniker S.E."/>
            <person name="de Grey A.D.N.J."/>
            <person name="Drysdale R.A."/>
            <person name="Harris N.L."/>
            <person name="Richter J."/>
            <person name="Russo S."/>
            <person name="Schroeder A.J."/>
            <person name="Shu S.Q."/>
            <person name="Stapleton M."/>
            <person name="Yamada C."/>
            <person name="Ashburner M."/>
            <person name="Gelbart W.M."/>
            <person name="Rubin G.M."/>
            <person name="Lewis S.E."/>
        </authorList>
    </citation>
    <scope>GENOME REANNOTATION</scope>
    <source>
        <strain>Berkeley</strain>
    </source>
</reference>
<reference key="3">
    <citation type="journal article" date="1995" name="Proc. Natl. Acad. Sci. U.S.A.">
        <title>The Ste locus, a component of the parasitic cry-Ste system of Drosophila melanogaster, encodes a protein that forms crystals in primary spermatocytes and mimics properties of the beta subunit of casein kinase 2.</title>
        <authorList>
            <person name="Bozzetti M.P."/>
            <person name="Massari S."/>
            <person name="Finelli P."/>
            <person name="Meggio F."/>
            <person name="Pinna L.A."/>
            <person name="Boldyreff B."/>
            <person name="Issinger O.G."/>
            <person name="Palumbo G."/>
            <person name="Ciriaco C."/>
            <person name="Bonaccorsi S."/>
            <person name="Pimpinelli S."/>
        </authorList>
    </citation>
    <scope>TISSUE SPECIFICITY</scope>
    <scope>INTERACTION WITH CKII-ALPHA</scope>
</reference>
<reference key="4">
    <citation type="journal article" date="2001" name="Chromosoma">
        <title>A role of the Drosophila homeless gene in repression of Stellate in male meiosis.</title>
        <authorList>
            <person name="Stapleton W."/>
            <person name="Das S."/>
            <person name="McKee B.D."/>
        </authorList>
    </citation>
    <scope>INDUCTION</scope>
</reference>
<reference key="5">
    <citation type="journal article" date="2001" name="Curr. Biol.">
        <title>Double-stranded RNA-mediated silencing of genomic tandem repeats and transposable elements in the D. melanogaster germline.</title>
        <authorList>
            <person name="Aravin A.A."/>
            <person name="Naumova N.M."/>
            <person name="Tulin A.V."/>
            <person name="Vagin V.V."/>
            <person name="Rozovsky Y.M."/>
            <person name="Gvozdev V.A."/>
        </authorList>
    </citation>
    <scope>INDUCTION</scope>
</reference>
<evidence type="ECO:0000269" key="1">
    <source>
    </source>
</evidence>
<evidence type="ECO:0000269" key="2">
    <source>
    </source>
</evidence>
<evidence type="ECO:0000269" key="3">
    <source>
    </source>
</evidence>
<evidence type="ECO:0000305" key="4"/>
<accession>Q7KV15</accession>
<accession>Q7KV17</accession>
<keyword id="KW-1185">Reference proteome</keyword>
<feature type="chain" id="PRO_0000068262" description="Stellate protein CG33239/CG33241">
    <location>
        <begin position="1"/>
        <end position="172"/>
    </location>
</feature>
<sequence>MSSSQNNNSSWIDWFLGIKGNQFLCRVPTDYVQDTFNQMGLEYFSEILDVILKPVIDSSSGLLYGDEKKWYGMIHARYIRSERGLIAMHRKYMRGDFGSCPNISCDRQNTLPVGLSAVWGKSTVKIHCPRCKSNFHPKSDTQLDGAMFGPSFPDIFFSMLPNLTSPLDDPRT</sequence>
<comment type="function">
    <text>Unknown. In males lacking the Y chromosome, its strong overexpression leads to the appearance of proteinaceous star-shaped crystals in the primary spermatocytes causing meiotic drive, possibly by interfering with normal casein kinase 2 activity.</text>
</comment>
<comment type="subunit">
    <text evidence="3">Interacts in vitro with the casein kinase 2 alpha subunit (CkII-alpha). The relevance of such interaction is however unclear in vivo.</text>
</comment>
<comment type="tissue specificity">
    <text evidence="3">Probably not expressed in wild-type flies. In males lacking the Y chromosome, it is testis-specific and constitutes the main component of star-shaped crystals.</text>
</comment>
<comment type="induction">
    <text evidence="1 2">In wild-type flies, it is strongly down-regulated by double-stranded RNA (dsRNA) interference mediated by Su(Ste) transcripts. In males lacking the Y chromosome, the absence of Su(Ste) locus, relieves such down-regulation, explaining why it is strongly expressed.</text>
</comment>
<comment type="miscellaneous">
    <text>There are multiple copies of the stellate gene in fruit fly, encoding proteins that are extremely similar, which makes their individual characterization difficult. Thus, most experiments probably do not discriminate between the different members.</text>
</comment>
<comment type="similarity">
    <text evidence="4">Belongs to the casein kinase 2 subunit beta family.</text>
</comment>